<name>YCFP_ECOSM</name>
<feature type="chain" id="PRO_1000136191" description="UPF0227 protein YcfP">
    <location>
        <begin position="1"/>
        <end position="180"/>
    </location>
</feature>
<dbReference type="EMBL" id="CP000970">
    <property type="protein sequence ID" value="ACB20077.1"/>
    <property type="molecule type" value="Genomic_DNA"/>
</dbReference>
<dbReference type="RefSeq" id="WP_000587933.1">
    <property type="nucleotide sequence ID" value="NC_010498.1"/>
</dbReference>
<dbReference type="SMR" id="B1LI36"/>
<dbReference type="ESTHER" id="ecoli-ycfp">
    <property type="family name" value="abh_upf00227"/>
</dbReference>
<dbReference type="GeneID" id="93776300"/>
<dbReference type="KEGG" id="ecm:EcSMS35_2018"/>
<dbReference type="HOGENOM" id="CLU_128769_0_0_6"/>
<dbReference type="Proteomes" id="UP000007011">
    <property type="component" value="Chromosome"/>
</dbReference>
<dbReference type="FunFam" id="3.40.50.1820:FF:000007">
    <property type="entry name" value="UPF0227 protein YcfP"/>
    <property type="match status" value="1"/>
</dbReference>
<dbReference type="Gene3D" id="3.40.50.1820">
    <property type="entry name" value="alpha/beta hydrolase"/>
    <property type="match status" value="1"/>
</dbReference>
<dbReference type="HAMAP" id="MF_01047">
    <property type="entry name" value="UPF0227"/>
    <property type="match status" value="1"/>
</dbReference>
<dbReference type="InterPro" id="IPR029058">
    <property type="entry name" value="AB_hydrolase_fold"/>
</dbReference>
<dbReference type="InterPro" id="IPR022987">
    <property type="entry name" value="UPF0227"/>
</dbReference>
<dbReference type="InterPro" id="IPR008886">
    <property type="entry name" value="UPF0227/Esterase_YqiA"/>
</dbReference>
<dbReference type="NCBIfam" id="NF003431">
    <property type="entry name" value="PRK04940.1"/>
    <property type="match status" value="1"/>
</dbReference>
<dbReference type="PANTHER" id="PTHR35602">
    <property type="entry name" value="ESTERASE YQIA-RELATED"/>
    <property type="match status" value="1"/>
</dbReference>
<dbReference type="PANTHER" id="PTHR35602:SF2">
    <property type="entry name" value="UPF0227 PROTEIN YCFP"/>
    <property type="match status" value="1"/>
</dbReference>
<dbReference type="Pfam" id="PF05728">
    <property type="entry name" value="UPF0227"/>
    <property type="match status" value="1"/>
</dbReference>
<dbReference type="SUPFAM" id="SSF53474">
    <property type="entry name" value="alpha/beta-Hydrolases"/>
    <property type="match status" value="1"/>
</dbReference>
<evidence type="ECO:0000255" key="1">
    <source>
        <dbReference type="HAMAP-Rule" id="MF_01047"/>
    </source>
</evidence>
<accession>B1LI36</accession>
<proteinExistence type="inferred from homology"/>
<sequence>MIIYLHGFDSNSPGNHEKVLQLQFIDPDVRLISYSTRHPKHDMQHLLKEVDKMLQLNVDERPLICGVGLGGYWAERIGFLCDIRQVIFNPNLFPYENMEGKIDRPEEYADIATKCVTNFREKNRDRCLVILSRNDEALNSQRTSEELHHYYEIVWDEEQTHKFKNISPHLQRIKAFKTLG</sequence>
<organism>
    <name type="scientific">Escherichia coli (strain SMS-3-5 / SECEC)</name>
    <dbReference type="NCBI Taxonomy" id="439855"/>
    <lineage>
        <taxon>Bacteria</taxon>
        <taxon>Pseudomonadati</taxon>
        <taxon>Pseudomonadota</taxon>
        <taxon>Gammaproteobacteria</taxon>
        <taxon>Enterobacterales</taxon>
        <taxon>Enterobacteriaceae</taxon>
        <taxon>Escherichia</taxon>
    </lineage>
</organism>
<comment type="similarity">
    <text evidence="1">Belongs to the UPF0227 family.</text>
</comment>
<gene>
    <name evidence="1" type="primary">ycfP</name>
    <name type="ordered locus">EcSMS35_2018</name>
</gene>
<protein>
    <recommendedName>
        <fullName evidence="1">UPF0227 protein YcfP</fullName>
    </recommendedName>
</protein>
<reference key="1">
    <citation type="journal article" date="2008" name="J. Bacteriol.">
        <title>Insights into the environmental resistance gene pool from the genome sequence of the multidrug-resistant environmental isolate Escherichia coli SMS-3-5.</title>
        <authorList>
            <person name="Fricke W.F."/>
            <person name="Wright M.S."/>
            <person name="Lindell A.H."/>
            <person name="Harkins D.M."/>
            <person name="Baker-Austin C."/>
            <person name="Ravel J."/>
            <person name="Stepanauskas R."/>
        </authorList>
    </citation>
    <scope>NUCLEOTIDE SEQUENCE [LARGE SCALE GENOMIC DNA]</scope>
    <source>
        <strain>SMS-3-5 / SECEC</strain>
    </source>
</reference>